<organism>
    <name type="scientific">Felis catus</name>
    <name type="common">Cat</name>
    <name type="synonym">Felis silvestris catus</name>
    <dbReference type="NCBI Taxonomy" id="9685"/>
    <lineage>
        <taxon>Eukaryota</taxon>
        <taxon>Metazoa</taxon>
        <taxon>Chordata</taxon>
        <taxon>Craniata</taxon>
        <taxon>Vertebrata</taxon>
        <taxon>Euteleostomi</taxon>
        <taxon>Mammalia</taxon>
        <taxon>Eutheria</taxon>
        <taxon>Laurasiatheria</taxon>
        <taxon>Carnivora</taxon>
        <taxon>Feliformia</taxon>
        <taxon>Felidae</taxon>
        <taxon>Felinae</taxon>
        <taxon>Felis</taxon>
    </lineage>
</organism>
<keyword id="KW-0186">Copper</keyword>
<keyword id="KW-0325">Glycoprotein</keyword>
<keyword id="KW-0470">Melanin biosynthesis</keyword>
<keyword id="KW-0472">Membrane</keyword>
<keyword id="KW-0479">Metal-binding</keyword>
<keyword id="KW-0503">Monooxygenase</keyword>
<keyword id="KW-0560">Oxidoreductase</keyword>
<keyword id="KW-1185">Reference proteome</keyword>
<keyword id="KW-0732">Signal</keyword>
<keyword id="KW-0812">Transmembrane</keyword>
<keyword id="KW-1133">Transmembrane helix</keyword>
<feature type="signal peptide" evidence="4">
    <location>
        <begin position="1"/>
        <end position="18"/>
    </location>
</feature>
<feature type="chain" id="PRO_0000452306" description="Tyrosinase" evidence="4">
    <location>
        <begin position="19"/>
        <end position="529"/>
    </location>
</feature>
<feature type="topological domain" description="Lumenal" evidence="6">
    <location>
        <begin position="19"/>
        <end position="472"/>
    </location>
</feature>
<feature type="transmembrane region" description="Helical" evidence="4">
    <location>
        <begin position="473"/>
        <end position="495"/>
    </location>
</feature>
<feature type="topological domain" description="Cytoplasmic" evidence="6">
    <location>
        <begin position="496"/>
        <end position="529"/>
    </location>
</feature>
<feature type="binding site" evidence="3">
    <location>
        <position position="180"/>
    </location>
    <ligand>
        <name>Cu cation</name>
        <dbReference type="ChEBI" id="CHEBI:23378"/>
        <label>A</label>
    </ligand>
</feature>
<feature type="binding site" evidence="3">
    <location>
        <position position="202"/>
    </location>
    <ligand>
        <name>Cu cation</name>
        <dbReference type="ChEBI" id="CHEBI:23378"/>
        <label>A</label>
    </ligand>
</feature>
<feature type="binding site" evidence="3">
    <location>
        <position position="211"/>
    </location>
    <ligand>
        <name>Cu cation</name>
        <dbReference type="ChEBI" id="CHEBI:23378"/>
        <label>A</label>
    </ligand>
</feature>
<feature type="binding site" evidence="3">
    <location>
        <position position="362"/>
    </location>
    <ligand>
        <name>Cu cation</name>
        <dbReference type="ChEBI" id="CHEBI:23378"/>
        <label>B</label>
    </ligand>
</feature>
<feature type="binding site" evidence="3">
    <location>
        <position position="366"/>
    </location>
    <ligand>
        <name>Cu cation</name>
        <dbReference type="ChEBI" id="CHEBI:23378"/>
        <label>B</label>
    </ligand>
</feature>
<feature type="binding site" evidence="3">
    <location>
        <position position="389"/>
    </location>
    <ligand>
        <name>Cu cation</name>
        <dbReference type="ChEBI" id="CHEBI:23378"/>
        <label>B</label>
    </ligand>
</feature>
<feature type="glycosylation site" description="N-linked (GlcNAc...) asparagine" evidence="4">
    <location>
        <position position="86"/>
    </location>
</feature>
<feature type="glycosylation site" description="N-linked (GlcNAc...) asparagine" evidence="4">
    <location>
        <position position="111"/>
    </location>
</feature>
<feature type="glycosylation site" description="N-linked (GlcNAc...) asparagine" evidence="4">
    <location>
        <position position="161"/>
    </location>
</feature>
<feature type="glycosylation site" description="N-linked (GlcNAc...) asparagine" evidence="4">
    <location>
        <position position="230"/>
    </location>
</feature>
<feature type="glycosylation site" description="N-linked (GlcNAc...) asparagine" evidence="4">
    <location>
        <position position="336"/>
    </location>
</feature>
<feature type="glycosylation site" description="N-linked (GlcNAc...) asparagine" evidence="4">
    <location>
        <position position="370"/>
    </location>
</feature>
<feature type="sequence variant" description="May be associated with siamese coat color." evidence="5">
    <original>G</original>
    <variation>W</variation>
    <location>
        <position position="227"/>
    </location>
</feature>
<feature type="sequence variant" description="May be associated with burmese coat color." evidence="5">
    <original>G</original>
    <variation>R</variation>
    <location>
        <position position="302"/>
    </location>
</feature>
<feature type="sequence conflict" description="In Ref. 1; AAY32311 and 3; AAB08729." evidence="6" ref="1 3">
    <original>R</original>
    <variation>E</variation>
    <location>
        <position position="294"/>
    </location>
</feature>
<feature type="sequence conflict" description="In Ref. 1; AAY32311 and 3; AAB08729." evidence="6" ref="1 3">
    <original>G</original>
    <variation>GN</variation>
    <location>
        <position position="302"/>
    </location>
</feature>
<proteinExistence type="evidence at transcript level"/>
<dbReference type="EC" id="1.14.18.1"/>
<dbReference type="EMBL" id="AH014863">
    <property type="protein sequence ID" value="AAY32311.1"/>
    <property type="molecule type" value="Genomic_DNA"/>
</dbReference>
<dbReference type="EMBL" id="AANG04002890">
    <property type="status" value="NOT_ANNOTATED_CDS"/>
    <property type="molecule type" value="Genomic_DNA"/>
</dbReference>
<dbReference type="EMBL" id="U40716">
    <property type="protein sequence ID" value="AAB08729.1"/>
    <property type="molecule type" value="mRNA"/>
</dbReference>
<dbReference type="RefSeq" id="XP_003992691.1">
    <property type="nucleotide sequence ID" value="XM_003992642.3"/>
</dbReference>
<dbReference type="SMR" id="P55033"/>
<dbReference type="FunCoup" id="P55033">
    <property type="interactions" value="5"/>
</dbReference>
<dbReference type="STRING" id="9685.ENSFCAP00000020791"/>
<dbReference type="GlyCosmos" id="P55033">
    <property type="glycosylation" value="6 sites, No reported glycans"/>
</dbReference>
<dbReference type="PaxDb" id="9685-ENSFCAP00000020791"/>
<dbReference type="Ensembl" id="ENSFCAT00000029640.4">
    <property type="protein sequence ID" value="ENSFCAP00000020791.3"/>
    <property type="gene ID" value="ENSFCAG00000024128.4"/>
</dbReference>
<dbReference type="GeneID" id="751100"/>
<dbReference type="KEGG" id="fca:751100"/>
<dbReference type="CTD" id="7299"/>
<dbReference type="VGNC" id="VGNC:66738">
    <property type="gene designation" value="TYR"/>
</dbReference>
<dbReference type="eggNOG" id="ENOG502QRET">
    <property type="taxonomic scope" value="Eukaryota"/>
</dbReference>
<dbReference type="GeneTree" id="ENSGT00940000155336"/>
<dbReference type="HOGENOM" id="CLU_038693_1_0_1"/>
<dbReference type="InParanoid" id="P55033"/>
<dbReference type="OMA" id="PMDKMAN"/>
<dbReference type="OrthoDB" id="6132182at2759"/>
<dbReference type="Proteomes" id="UP000011712">
    <property type="component" value="Chromosome D1"/>
</dbReference>
<dbReference type="Bgee" id="ENSFCAG00000024128">
    <property type="expression patterns" value="Expressed in eyeball of camera-type eye and 3 other cell types or tissues"/>
</dbReference>
<dbReference type="GO" id="GO:0042470">
    <property type="term" value="C:melanosome"/>
    <property type="evidence" value="ECO:0000250"/>
    <property type="project" value="UniProtKB"/>
</dbReference>
<dbReference type="GO" id="GO:0033162">
    <property type="term" value="C:melanosome membrane"/>
    <property type="evidence" value="ECO:0007669"/>
    <property type="project" value="UniProtKB-SubCell"/>
</dbReference>
<dbReference type="GO" id="GO:0046872">
    <property type="term" value="F:metal ion binding"/>
    <property type="evidence" value="ECO:0007669"/>
    <property type="project" value="UniProtKB-KW"/>
</dbReference>
<dbReference type="GO" id="GO:0004503">
    <property type="term" value="F:tyrosinase activity"/>
    <property type="evidence" value="ECO:0000318"/>
    <property type="project" value="GO_Central"/>
</dbReference>
<dbReference type="GO" id="GO:0042438">
    <property type="term" value="P:melanin biosynthetic process"/>
    <property type="evidence" value="ECO:0000318"/>
    <property type="project" value="GO_Central"/>
</dbReference>
<dbReference type="GO" id="GO:0043473">
    <property type="term" value="P:pigmentation"/>
    <property type="evidence" value="ECO:0000318"/>
    <property type="project" value="GO_Central"/>
</dbReference>
<dbReference type="FunFam" id="1.10.1280.10:FF:000003">
    <property type="entry name" value="Tyrosinase"/>
    <property type="match status" value="1"/>
</dbReference>
<dbReference type="Gene3D" id="1.10.1280.10">
    <property type="entry name" value="Di-copper center containing domain from catechol oxidase"/>
    <property type="match status" value="1"/>
</dbReference>
<dbReference type="InterPro" id="IPR008922">
    <property type="entry name" value="Di-copper_centre_dom_sf"/>
</dbReference>
<dbReference type="InterPro" id="IPR050316">
    <property type="entry name" value="Tyrosinase/Hemocyanin"/>
</dbReference>
<dbReference type="InterPro" id="IPR002227">
    <property type="entry name" value="Tyrosinase_Cu-bd"/>
</dbReference>
<dbReference type="PANTHER" id="PTHR11474:SF124">
    <property type="entry name" value="TYROSINASE"/>
    <property type="match status" value="1"/>
</dbReference>
<dbReference type="PANTHER" id="PTHR11474">
    <property type="entry name" value="TYROSINASE FAMILY MEMBER"/>
    <property type="match status" value="1"/>
</dbReference>
<dbReference type="Pfam" id="PF00264">
    <property type="entry name" value="Tyrosinase"/>
    <property type="match status" value="1"/>
</dbReference>
<dbReference type="PRINTS" id="PR00092">
    <property type="entry name" value="TYROSINASE"/>
</dbReference>
<dbReference type="SUPFAM" id="SSF48056">
    <property type="entry name" value="Di-copper centre-containing domain"/>
    <property type="match status" value="1"/>
</dbReference>
<dbReference type="PROSITE" id="PS00497">
    <property type="entry name" value="TYROSINASE_1"/>
    <property type="match status" value="1"/>
</dbReference>
<dbReference type="PROSITE" id="PS00498">
    <property type="entry name" value="TYROSINASE_2"/>
    <property type="match status" value="1"/>
</dbReference>
<sequence length="529" mass="60391">MLLAALCCLLWSFRTSAGHFPRACASSKSLMEKECCPAWTGDSSPCGQLSGRGACQDITLSKAPLGPQYPFTGMDDREAWPSVFYNRTCQCFGNFMGFNCGNCKFGFWGPNCTEKRLLVRRNIFDLSVPEKNKFLAYLTLAKHTISPDYVIPIGTYGQMNNGSTPMFNDINVYDLFVWMHYYVSRDTLLGGSEIWKDIDFAHEAPGFLPWHRLFLLLWEQEIQKLTGDENFTIPYWDWRDAKSCDICTDEYMGGHNPANPNLLSPASFFSSWQIICTRLEEYNSRQALCDGTPRGPLLRNPGHDKARTPRLPSSADVEFCLSLTQYESDSMDKAANFSFRNTLEGFASPLTGIADASQSSMHNALHIYMNGTMSQVQGSANDPIFLLHHAFVDSIFEQWLRRHHPLQEVYPEANAPIGHNRESYMVPFIPLYRNGDFFISSRDLGYDYSNLQDSERDIFQDYIKPFLEQASRIWPWLIGAAVVGSVLTAVLGRLTSLLCRRKRKQLREERQPLLMEKEDYHSLLYQTHV</sequence>
<protein>
    <recommendedName>
        <fullName>Tyrosinase</fullName>
        <ecNumber>1.14.18.1</ecNumber>
    </recommendedName>
    <alternativeName>
        <fullName>Monophenol monooxygenase</fullName>
    </alternativeName>
</protein>
<name>TYRO_FELCA</name>
<evidence type="ECO:0000250" key="1">
    <source>
        <dbReference type="UniProtKB" id="P11344"/>
    </source>
</evidence>
<evidence type="ECO:0000250" key="2">
    <source>
        <dbReference type="UniProtKB" id="P14679"/>
    </source>
</evidence>
<evidence type="ECO:0000250" key="3">
    <source>
        <dbReference type="UniProtKB" id="Q9ZP19"/>
    </source>
</evidence>
<evidence type="ECO:0000255" key="4"/>
<evidence type="ECO:0000269" key="5">
    <source>
    </source>
</evidence>
<evidence type="ECO:0000305" key="6"/>
<accession>P55033</accession>
<accession>A0A0A0MQ28</accession>
<accession>Q2VPV8</accession>
<reference key="1">
    <citation type="journal article" date="2005" name="J. Hered.">
        <title>Tyrosinase and tyrosinase related protein 1 alleles specify domestic cat coat color phenotypes of the albino and brown loci.</title>
        <authorList>
            <person name="Schmidt-Kuntzel A."/>
            <person name="Eizirik E."/>
            <person name="O'Brien S.J."/>
            <person name="Menotti-Raymond M."/>
        </authorList>
    </citation>
    <scope>NUCLEOTIDE SEQUENCE [GENOMIC DNA]</scope>
    <scope>VARIANTS TRP-227 AND ARG-302</scope>
</reference>
<reference key="2">
    <citation type="journal article" date="2007" name="Genome Res.">
        <title>Initial sequence and comparative analysis of the cat genome.</title>
        <authorList>
            <person name="Pontius J.U."/>
            <person name="Mullikin J.C."/>
            <person name="Smith D.R."/>
            <person name="Lindblad-Toh K."/>
            <person name="Gnerre S."/>
            <person name="Clamp M."/>
            <person name="Chang J."/>
            <person name="Stephens R."/>
            <person name="Neelam B."/>
            <person name="Volfovsky N."/>
            <person name="Schaffer A.A."/>
            <person name="Agarwala R."/>
            <person name="Narfstrom K."/>
            <person name="Murphy W.J."/>
            <person name="Giger U."/>
            <person name="Roca A.L."/>
            <person name="Antunes A."/>
            <person name="Menotti-Raymond M."/>
            <person name="Yuhki N."/>
            <person name="Pecon-Slattery J."/>
            <person name="Johnson W.E."/>
            <person name="Bourque G."/>
            <person name="Tesler G."/>
            <person name="O'Brien S.J."/>
        </authorList>
    </citation>
    <scope>NUCLEOTIDE SEQUENCE [LARGE SCALE GENOMIC DNA]</scope>
    <source>
        <strain>Abyssinian</strain>
    </source>
</reference>
<reference key="3">
    <citation type="journal article" date="1997" name="Vet. Pathol.">
        <title>Cutaneous malignant melanomas in 57 cats: identification of (amelanotic) signet-ring and balloon cell types and verification of their origin by immunohistochemistry, electron microscopy, and in situ hybridization.</title>
        <authorList>
            <person name="van der Linde-Sipman J.S."/>
            <person name="de Wit M.M."/>
            <person name="van Garderen E."/>
            <person name="Molenbeek R.F."/>
            <person name="van der Velde-Zimmermann D."/>
            <person name="de Weger R.A."/>
        </authorList>
    </citation>
    <scope>NUCLEOTIDE SEQUENCE [MRNA] OF 279-357</scope>
    <source>
        <strain>European shorthair</strain>
        <tissue>Melanoma</tissue>
    </source>
</reference>
<gene>
    <name type="primary">TYR</name>
</gene>
<comment type="function">
    <text evidence="1">This is a copper-containing oxidase that functions in the formation of pigments such as melanins and other polyphenolic compounds (By similarity). Catalyzes the initial and rate limiting step in the cascade of reactions leading to melanin production from tyrosine (By similarity). In addition to hydroxylating tyrosine to DOPA (3,4-dihydroxyphenylalanine), also catalyzes the oxidation of DOPA to DOPA-quinone, and possibly the oxidation of DHI (5,6-dihydroxyindole) to indole-5,6 quinone (By similarity).</text>
</comment>
<comment type="catalytic activity">
    <reaction evidence="1">
        <text>2 L-dopa + O2 = 2 L-dopaquinone + 2 H2O</text>
        <dbReference type="Rhea" id="RHEA:34287"/>
        <dbReference type="ChEBI" id="CHEBI:15377"/>
        <dbReference type="ChEBI" id="CHEBI:15379"/>
        <dbReference type="ChEBI" id="CHEBI:57504"/>
        <dbReference type="ChEBI" id="CHEBI:57924"/>
        <dbReference type="EC" id="1.14.18.1"/>
    </reaction>
</comment>
<comment type="catalytic activity">
    <reaction evidence="1">
        <text>L-tyrosine + O2 = L-dopaquinone + H2O</text>
        <dbReference type="Rhea" id="RHEA:18117"/>
        <dbReference type="ChEBI" id="CHEBI:15377"/>
        <dbReference type="ChEBI" id="CHEBI:15379"/>
        <dbReference type="ChEBI" id="CHEBI:57924"/>
        <dbReference type="ChEBI" id="CHEBI:58315"/>
        <dbReference type="EC" id="1.14.18.1"/>
    </reaction>
</comment>
<comment type="catalytic activity">
    <reaction evidence="2">
        <text>2 5,6-dihydroxyindole-2-carboxylate + O2 = 2 indole-5,6-quinone-2-carboxylate + 2 H2O</text>
        <dbReference type="Rhea" id="RHEA:68388"/>
        <dbReference type="ChEBI" id="CHEBI:15377"/>
        <dbReference type="ChEBI" id="CHEBI:15379"/>
        <dbReference type="ChEBI" id="CHEBI:16875"/>
        <dbReference type="ChEBI" id="CHEBI:177869"/>
    </reaction>
    <physiologicalReaction direction="left-to-right" evidence="2">
        <dbReference type="Rhea" id="RHEA:68389"/>
    </physiologicalReaction>
</comment>
<comment type="cofactor">
    <cofactor evidence="3">
        <name>Cu(2+)</name>
        <dbReference type="ChEBI" id="CHEBI:29036"/>
    </cofactor>
    <text evidence="3">Binds 2 copper ions per subunit.</text>
</comment>
<comment type="subunit">
    <text evidence="2">Forms an OPN3-dependent complex with DCT in response to blue light in melanocytes.</text>
</comment>
<comment type="subcellular location">
    <subcellularLocation>
        <location evidence="2">Melanosome membrane</location>
        <topology evidence="2">Single-pass type I membrane protein</topology>
    </subcellularLocation>
    <subcellularLocation>
        <location evidence="1">Melanosome</location>
    </subcellularLocation>
    <text evidence="1">Proper trafficking to melanosome is regulated by SGSM2, ANKRD27, RAB9A, RAB32 and RAB38.</text>
</comment>
<comment type="PTM">
    <text evidence="1">Glycosylated.</text>
</comment>
<comment type="polymorphism">
    <text evidence="5">Allelic variations in TYR may be associated with coat color phenotype in siamese and burmese cats. The coat color trait is autosomal recessive.</text>
</comment>
<comment type="similarity">
    <text evidence="6">Belongs to the tyrosinase family.</text>
</comment>
<comment type="online information" name="Protein Spotlight">
    <link uri="https://www.proteinspotlight.org/back_issues/049"/>
    <text>Snowy stardom - Issue 49 of August 2004</text>
</comment>